<comment type="function">
    <text evidence="5">Plays an essential role for normal photoreceptor cell maintenance and vision.</text>
</comment>
<comment type="subcellular location">
    <subcellularLocation>
        <location evidence="5">Cell projection</location>
        <location evidence="5">Cilium</location>
        <location evidence="5">Photoreceptor outer segment</location>
    </subcellularLocation>
    <subcellularLocation>
        <location evidence="5">Photoreceptor inner segment</location>
    </subcellularLocation>
</comment>
<comment type="tissue specificity">
    <text evidence="5">Specifically expressed in retina.</text>
</comment>
<comment type="developmental stage">
    <text evidence="4">Expressed in the developing eye at 14 dpc.</text>
</comment>
<comment type="disruption phenotype">
    <text evidence="5">Deficient mice develop severe early-onset retinal degeneration associated with a disorganized outer segment, progressive thinning of the outer nuclear layer, microglia activation and non-responsive to light by 8 weeks of age.</text>
</comment>
<comment type="sequence caution" evidence="6">
    <conflict type="erroneous initiation">
        <sequence resource="EMBL-CDS" id="AAH27072"/>
    </conflict>
</comment>
<comment type="sequence caution" evidence="6">
    <conflict type="erroneous initiation">
        <sequence resource="EMBL-CDS" id="BAC31912"/>
    </conflict>
</comment>
<protein>
    <recommendedName>
        <fullName evidence="1">Photoreceptor cilium actin regulator</fullName>
    </recommendedName>
</protein>
<sequence length="1279" mass="139298">MGCTPSHNVIVNSVAKSGIQFFKKPKAILPGCQWGSPKCPIPLLVQSSTFCDSGGELHLGERLVEETVSSSKKLQAMAEGVRQLPKAMEGLIPESQTFQVNKPQGHRATDISFRTEGSHGTQEVDFSGKESKENTPQETSKGNRESVCHQPDSQDHCRQSATESKGRVDFPEPLVKAHQHAYAYLHTSLSRYEAIVRLVQQASQTWGLLRPMLNFLLLCFEEAGQLLSEISKDGDVLLQEVRGDLAWPLRKGEPWEQHPDLLQQLLQYTVSKLRALHGTVAALTGSFLEGSSSCLRSTAGHLEGKLSTKRGIDECLLRALGQLESLTSSHGDAGLLGPPLCSEDSGIGADNESVHSVEKLGKQASWDFAAELGEWKPGTAAQVEARPSGHAWQEGPYWTGSDRPQDCPLSSPRIAKVQPAVQDEARSASTSGAGAEAVTSGPSEAAESLPWDSLGAEIPVRTPLSRSSGLTDAPSLSEEEDCSPEEEDELSSTDLHPEPQKALPSRPRSSPDTRESLFQPYSKELRNPQAQEMILKMKEAISERIKFVPEPSRPQDWTEEEEGGTVVPPRPRSVSGSRGGPERQRRSQSEGCLKSHVEDPTLQELRRVQTDLSRRLEVFYALGATRQGQSRERCLPSRASVLWPPTNCRVSPSSAISKFKASLTQNFSILPNQDKSIFQKGSPCFDGEQPCQGKAEKLPNAIFCGKKSGRAPRDNERDIRACPTRPSVKTLIETFSPTESLRMPRNCRNLGSSPCLRKWGVPAMPPRFPIYRGLAPLYSKPQISPAAGWRPSAPFPSLPLAEVSESEDISGDVEEDLENLPPPPLEVLMDKSFAALECPECSQPAGSSLEETLLPGLQEASHPKRTWVSPRLKASMSPMDLLPSKGSGSSPRLHSTRSGSTRIVGDSRKLTLDLNSKQTASPSSEAKSRAQIQARAETIAGFSKQHQKAIPWHHTNPTPGQSRTLEPSLARFSRDPHSSEASRKGPERSLPRVRKASPQRAQWASQGDRRLQSLPSSHGPSQPGLPAVLSSPSPPLSPRTLSPPATRKTTSPPCQHPQSNPAPGSPPVRRTETNTPSSASCSSPSVSPSRGSKDSIHSEDSEATTAKASRNTCSIFYPAATSLFEAKSSSSTSHPQMLPEPGGLLRTPTGGWRGSSGQRLRADSQKRTVLNALNPLPFVRRTASDRQRQQGDQLQQSRSDWEFHSCQNSSSSSSSEENPKQELPPWNNSRVPELQGSSTKRASPLELCVLGHGLQPEARMNRGQDRPQPESQPQHKEIS</sequence>
<evidence type="ECO:0000250" key="1">
    <source>
        <dbReference type="UniProtKB" id="A6NGG8"/>
    </source>
</evidence>
<evidence type="ECO:0000255" key="2"/>
<evidence type="ECO:0000256" key="3">
    <source>
        <dbReference type="SAM" id="MobiDB-lite"/>
    </source>
</evidence>
<evidence type="ECO:0000269" key="4">
    <source>
    </source>
</evidence>
<evidence type="ECO:0000269" key="5">
    <source>
    </source>
</evidence>
<evidence type="ECO:0000305" key="6"/>
<evidence type="ECO:0000312" key="7">
    <source>
        <dbReference type="MGI" id="MGI:2385061"/>
    </source>
</evidence>
<keyword id="KW-0966">Cell projection</keyword>
<keyword id="KW-0969">Cilium</keyword>
<keyword id="KW-0449">Lipoprotein</keyword>
<keyword id="KW-0519">Myristate</keyword>
<keyword id="KW-0564">Palmitate</keyword>
<keyword id="KW-1185">Reference proteome</keyword>
<keyword id="KW-0716">Sensory transduction</keyword>
<keyword id="KW-0844">Vision</keyword>
<feature type="initiator methionine" description="Removed" evidence="2">
    <location>
        <position position="1"/>
    </location>
</feature>
<feature type="chain" id="PRO_0000329079" description="Photoreceptor cilium actin regulator">
    <location>
        <begin position="2"/>
        <end position="1279"/>
    </location>
</feature>
<feature type="region of interest" description="Disordered" evidence="3">
    <location>
        <begin position="101"/>
        <end position="168"/>
    </location>
</feature>
<feature type="region of interest" description="Disordered" evidence="3">
    <location>
        <begin position="380"/>
        <end position="598"/>
    </location>
</feature>
<feature type="region of interest" description="Disordered" evidence="3">
    <location>
        <begin position="802"/>
        <end position="821"/>
    </location>
</feature>
<feature type="region of interest" description="Disordered" evidence="3">
    <location>
        <begin position="860"/>
        <end position="1107"/>
    </location>
</feature>
<feature type="region of interest" description="Disordered" evidence="3">
    <location>
        <begin position="1127"/>
        <end position="1279"/>
    </location>
</feature>
<feature type="compositionally biased region" description="Basic and acidic residues" evidence="3">
    <location>
        <begin position="126"/>
        <end position="168"/>
    </location>
</feature>
<feature type="compositionally biased region" description="Acidic residues" evidence="3">
    <location>
        <begin position="477"/>
        <end position="491"/>
    </location>
</feature>
<feature type="compositionally biased region" description="Basic and acidic residues" evidence="3">
    <location>
        <begin position="535"/>
        <end position="547"/>
    </location>
</feature>
<feature type="compositionally biased region" description="Basic and acidic residues" evidence="3">
    <location>
        <begin position="580"/>
        <end position="598"/>
    </location>
</feature>
<feature type="compositionally biased region" description="Acidic residues" evidence="3">
    <location>
        <begin position="804"/>
        <end position="818"/>
    </location>
</feature>
<feature type="compositionally biased region" description="Polar residues" evidence="3">
    <location>
        <begin position="886"/>
        <end position="901"/>
    </location>
</feature>
<feature type="compositionally biased region" description="Polar residues" evidence="3">
    <location>
        <begin position="913"/>
        <end position="925"/>
    </location>
</feature>
<feature type="compositionally biased region" description="Polar residues" evidence="3">
    <location>
        <begin position="955"/>
        <end position="965"/>
    </location>
</feature>
<feature type="compositionally biased region" description="Basic and acidic residues" evidence="3">
    <location>
        <begin position="972"/>
        <end position="990"/>
    </location>
</feature>
<feature type="compositionally biased region" description="Polar residues" evidence="3">
    <location>
        <begin position="1047"/>
        <end position="1062"/>
    </location>
</feature>
<feature type="compositionally biased region" description="Low complexity" evidence="3">
    <location>
        <begin position="1076"/>
        <end position="1090"/>
    </location>
</feature>
<feature type="compositionally biased region" description="Basic and acidic residues" evidence="3">
    <location>
        <begin position="1091"/>
        <end position="1100"/>
    </location>
</feature>
<feature type="compositionally biased region" description="Polar residues" evidence="3">
    <location>
        <begin position="1226"/>
        <end position="1241"/>
    </location>
</feature>
<feature type="compositionally biased region" description="Basic and acidic residues" evidence="3">
    <location>
        <begin position="1259"/>
        <end position="1279"/>
    </location>
</feature>
<feature type="lipid moiety-binding region" description="N-myristoyl glycine" evidence="2">
    <location>
        <position position="2"/>
    </location>
</feature>
<feature type="lipid moiety-binding region" description="S-palmitoyl cysteine" evidence="2">
    <location>
        <position position="3"/>
    </location>
</feature>
<feature type="sequence conflict" description="In Ref. 2; BAC31912." evidence="6" ref="2">
    <original>S</original>
    <variation>G</variation>
    <location>
        <position position="1030"/>
    </location>
</feature>
<dbReference type="EMBL" id="BC027072">
    <property type="protein sequence ID" value="AAH27072.1"/>
    <property type="status" value="ALT_INIT"/>
    <property type="molecule type" value="mRNA"/>
</dbReference>
<dbReference type="EMBL" id="BC046516">
    <property type="protein sequence ID" value="AAH46516.1"/>
    <property type="molecule type" value="mRNA"/>
</dbReference>
<dbReference type="EMBL" id="BC060373">
    <property type="protein sequence ID" value="AAH60373.1"/>
    <property type="molecule type" value="mRNA"/>
</dbReference>
<dbReference type="EMBL" id="AK044416">
    <property type="protein sequence ID" value="BAC31912.1"/>
    <property type="status" value="ALT_INIT"/>
    <property type="molecule type" value="mRNA"/>
</dbReference>
<dbReference type="CCDS" id="CCDS28962.1"/>
<dbReference type="RefSeq" id="NP_666194.2">
    <property type="nucleotide sequence ID" value="NM_146082.3"/>
</dbReference>
<dbReference type="BioGRID" id="230348">
    <property type="interactions" value="2"/>
</dbReference>
<dbReference type="FunCoup" id="Q6PAC4">
    <property type="interactions" value="34"/>
</dbReference>
<dbReference type="STRING" id="10090.ENSMUSP00000051871"/>
<dbReference type="GlyGen" id="Q6PAC4">
    <property type="glycosylation" value="1 site"/>
</dbReference>
<dbReference type="iPTMnet" id="Q6PAC4"/>
<dbReference type="PhosphoSitePlus" id="Q6PAC4"/>
<dbReference type="PaxDb" id="10090-ENSMUSP00000051871"/>
<dbReference type="Antibodypedia" id="62851">
    <property type="antibodies" value="32 antibodies from 11 providers"/>
</dbReference>
<dbReference type="Ensembl" id="ENSMUST00000057405.9">
    <property type="protein sequence ID" value="ENSMUSP00000051871.8"/>
    <property type="gene ID" value="ENSMUSG00000044375.9"/>
</dbReference>
<dbReference type="GeneID" id="225004"/>
<dbReference type="KEGG" id="mmu:225004"/>
<dbReference type="UCSC" id="uc008dmv.1">
    <property type="organism name" value="mouse"/>
</dbReference>
<dbReference type="AGR" id="MGI:2385061"/>
<dbReference type="CTD" id="388939"/>
<dbReference type="MGI" id="MGI:2385061">
    <property type="gene designation" value="Pcare"/>
</dbReference>
<dbReference type="VEuPathDB" id="HostDB:ENSMUSG00000044375"/>
<dbReference type="eggNOG" id="ENOG502QUWN">
    <property type="taxonomic scope" value="Eukaryota"/>
</dbReference>
<dbReference type="GeneTree" id="ENSGT00390000002768"/>
<dbReference type="HOGENOM" id="CLU_007417_0_0_1"/>
<dbReference type="InParanoid" id="Q6PAC4"/>
<dbReference type="OMA" id="HSIFCPA"/>
<dbReference type="OrthoDB" id="8954214at2759"/>
<dbReference type="PhylomeDB" id="Q6PAC4"/>
<dbReference type="TreeFam" id="TF336604"/>
<dbReference type="BioGRID-ORCS" id="225004">
    <property type="hits" value="2 hits in 76 CRISPR screens"/>
</dbReference>
<dbReference type="PRO" id="PR:Q6PAC4"/>
<dbReference type="Proteomes" id="UP000000589">
    <property type="component" value="Chromosome 17"/>
</dbReference>
<dbReference type="RNAct" id="Q6PAC4">
    <property type="molecule type" value="protein"/>
</dbReference>
<dbReference type="Bgee" id="ENSMUSG00000044375">
    <property type="expression patterns" value="Expressed in retinal neural layer and 8 other cell types or tissues"/>
</dbReference>
<dbReference type="GO" id="GO:0005929">
    <property type="term" value="C:cilium"/>
    <property type="evidence" value="ECO:0000266"/>
    <property type="project" value="MGI"/>
</dbReference>
<dbReference type="GO" id="GO:0120199">
    <property type="term" value="C:cone photoreceptor outer segment"/>
    <property type="evidence" value="ECO:0000314"/>
    <property type="project" value="MGI"/>
</dbReference>
<dbReference type="GO" id="GO:0001917">
    <property type="term" value="C:photoreceptor inner segment"/>
    <property type="evidence" value="ECO:0000314"/>
    <property type="project" value="MGI"/>
</dbReference>
<dbReference type="GO" id="GO:0050908">
    <property type="term" value="P:detection of light stimulus involved in visual perception"/>
    <property type="evidence" value="ECO:0000266"/>
    <property type="project" value="MGI"/>
</dbReference>
<dbReference type="GO" id="GO:0035845">
    <property type="term" value="P:photoreceptor cell outer segment organization"/>
    <property type="evidence" value="ECO:0000315"/>
    <property type="project" value="MGI"/>
</dbReference>
<dbReference type="GO" id="GO:1903546">
    <property type="term" value="P:protein localization to photoreceptor outer segment"/>
    <property type="evidence" value="ECO:0000315"/>
    <property type="project" value="MGI"/>
</dbReference>
<dbReference type="InterPro" id="IPR029352">
    <property type="entry name" value="PCARE"/>
</dbReference>
<dbReference type="PANTHER" id="PTHR22017">
    <property type="entry name" value="PHOTORECEPTOR CILIUM ACTIN REGULATOR"/>
    <property type="match status" value="1"/>
</dbReference>
<dbReference type="PANTHER" id="PTHR22017:SF0">
    <property type="entry name" value="PHOTORECEPTOR CILIUM ACTIN REGULATOR"/>
    <property type="match status" value="1"/>
</dbReference>
<dbReference type="Pfam" id="PF15449">
    <property type="entry name" value="Retinal"/>
    <property type="match status" value="1"/>
</dbReference>
<name>PCARE_MOUSE</name>
<reference key="1">
    <citation type="journal article" date="2004" name="Genome Res.">
        <title>The status, quality, and expansion of the NIH full-length cDNA project: the Mammalian Gene Collection (MGC).</title>
        <authorList>
            <consortium name="The MGC Project Team"/>
        </authorList>
    </citation>
    <scope>NUCLEOTIDE SEQUENCE [LARGE SCALE MRNA]</scope>
    <source>
        <tissue>Eye</tissue>
    </source>
</reference>
<reference key="2">
    <citation type="journal article" date="2005" name="Science">
        <title>The transcriptional landscape of the mammalian genome.</title>
        <authorList>
            <person name="Carninci P."/>
            <person name="Kasukawa T."/>
            <person name="Katayama S."/>
            <person name="Gough J."/>
            <person name="Frith M.C."/>
            <person name="Maeda N."/>
            <person name="Oyama R."/>
            <person name="Ravasi T."/>
            <person name="Lenhard B."/>
            <person name="Wells C."/>
            <person name="Kodzius R."/>
            <person name="Shimokawa K."/>
            <person name="Bajic V.B."/>
            <person name="Brenner S.E."/>
            <person name="Batalov S."/>
            <person name="Forrest A.R."/>
            <person name="Zavolan M."/>
            <person name="Davis M.J."/>
            <person name="Wilming L.G."/>
            <person name="Aidinis V."/>
            <person name="Allen J.E."/>
            <person name="Ambesi-Impiombato A."/>
            <person name="Apweiler R."/>
            <person name="Aturaliya R.N."/>
            <person name="Bailey T.L."/>
            <person name="Bansal M."/>
            <person name="Baxter L."/>
            <person name="Beisel K.W."/>
            <person name="Bersano T."/>
            <person name="Bono H."/>
            <person name="Chalk A.M."/>
            <person name="Chiu K.P."/>
            <person name="Choudhary V."/>
            <person name="Christoffels A."/>
            <person name="Clutterbuck D.R."/>
            <person name="Crowe M.L."/>
            <person name="Dalla E."/>
            <person name="Dalrymple B.P."/>
            <person name="de Bono B."/>
            <person name="Della Gatta G."/>
            <person name="di Bernardo D."/>
            <person name="Down T."/>
            <person name="Engstrom P."/>
            <person name="Fagiolini M."/>
            <person name="Faulkner G."/>
            <person name="Fletcher C.F."/>
            <person name="Fukushima T."/>
            <person name="Furuno M."/>
            <person name="Futaki S."/>
            <person name="Gariboldi M."/>
            <person name="Georgii-Hemming P."/>
            <person name="Gingeras T.R."/>
            <person name="Gojobori T."/>
            <person name="Green R.E."/>
            <person name="Gustincich S."/>
            <person name="Harbers M."/>
            <person name="Hayashi Y."/>
            <person name="Hensch T.K."/>
            <person name="Hirokawa N."/>
            <person name="Hill D."/>
            <person name="Huminiecki L."/>
            <person name="Iacono M."/>
            <person name="Ikeo K."/>
            <person name="Iwama A."/>
            <person name="Ishikawa T."/>
            <person name="Jakt M."/>
            <person name="Kanapin A."/>
            <person name="Katoh M."/>
            <person name="Kawasawa Y."/>
            <person name="Kelso J."/>
            <person name="Kitamura H."/>
            <person name="Kitano H."/>
            <person name="Kollias G."/>
            <person name="Krishnan S.P."/>
            <person name="Kruger A."/>
            <person name="Kummerfeld S.K."/>
            <person name="Kurochkin I.V."/>
            <person name="Lareau L.F."/>
            <person name="Lazarevic D."/>
            <person name="Lipovich L."/>
            <person name="Liu J."/>
            <person name="Liuni S."/>
            <person name="McWilliam S."/>
            <person name="Madan Babu M."/>
            <person name="Madera M."/>
            <person name="Marchionni L."/>
            <person name="Matsuda H."/>
            <person name="Matsuzawa S."/>
            <person name="Miki H."/>
            <person name="Mignone F."/>
            <person name="Miyake S."/>
            <person name="Morris K."/>
            <person name="Mottagui-Tabar S."/>
            <person name="Mulder N."/>
            <person name="Nakano N."/>
            <person name="Nakauchi H."/>
            <person name="Ng P."/>
            <person name="Nilsson R."/>
            <person name="Nishiguchi S."/>
            <person name="Nishikawa S."/>
            <person name="Nori F."/>
            <person name="Ohara O."/>
            <person name="Okazaki Y."/>
            <person name="Orlando V."/>
            <person name="Pang K.C."/>
            <person name="Pavan W.J."/>
            <person name="Pavesi G."/>
            <person name="Pesole G."/>
            <person name="Petrovsky N."/>
            <person name="Piazza S."/>
            <person name="Reed J."/>
            <person name="Reid J.F."/>
            <person name="Ring B.Z."/>
            <person name="Ringwald M."/>
            <person name="Rost B."/>
            <person name="Ruan Y."/>
            <person name="Salzberg S.L."/>
            <person name="Sandelin A."/>
            <person name="Schneider C."/>
            <person name="Schoenbach C."/>
            <person name="Sekiguchi K."/>
            <person name="Semple C.A."/>
            <person name="Seno S."/>
            <person name="Sessa L."/>
            <person name="Sheng Y."/>
            <person name="Shibata Y."/>
            <person name="Shimada H."/>
            <person name="Shimada K."/>
            <person name="Silva D."/>
            <person name="Sinclair B."/>
            <person name="Sperling S."/>
            <person name="Stupka E."/>
            <person name="Sugiura K."/>
            <person name="Sultana R."/>
            <person name="Takenaka Y."/>
            <person name="Taki K."/>
            <person name="Tammoja K."/>
            <person name="Tan S.L."/>
            <person name="Tang S."/>
            <person name="Taylor M.S."/>
            <person name="Tegner J."/>
            <person name="Teichmann S.A."/>
            <person name="Ueda H.R."/>
            <person name="van Nimwegen E."/>
            <person name="Verardo R."/>
            <person name="Wei C.L."/>
            <person name="Yagi K."/>
            <person name="Yamanishi H."/>
            <person name="Zabarovsky E."/>
            <person name="Zhu S."/>
            <person name="Zimmer A."/>
            <person name="Hide W."/>
            <person name="Bult C."/>
            <person name="Grimmond S.M."/>
            <person name="Teasdale R.D."/>
            <person name="Liu E.T."/>
            <person name="Brusic V."/>
            <person name="Quackenbush J."/>
            <person name="Wahlestedt C."/>
            <person name="Mattick J.S."/>
            <person name="Hume D.A."/>
            <person name="Kai C."/>
            <person name="Sasaki D."/>
            <person name="Tomaru Y."/>
            <person name="Fukuda S."/>
            <person name="Kanamori-Katayama M."/>
            <person name="Suzuki M."/>
            <person name="Aoki J."/>
            <person name="Arakawa T."/>
            <person name="Iida J."/>
            <person name="Imamura K."/>
            <person name="Itoh M."/>
            <person name="Kato T."/>
            <person name="Kawaji H."/>
            <person name="Kawagashira N."/>
            <person name="Kawashima T."/>
            <person name="Kojima M."/>
            <person name="Kondo S."/>
            <person name="Konno H."/>
            <person name="Nakano K."/>
            <person name="Ninomiya N."/>
            <person name="Nishio T."/>
            <person name="Okada M."/>
            <person name="Plessy C."/>
            <person name="Shibata K."/>
            <person name="Shiraki T."/>
            <person name="Suzuki S."/>
            <person name="Tagami M."/>
            <person name="Waki K."/>
            <person name="Watahiki A."/>
            <person name="Okamura-Oho Y."/>
            <person name="Suzuki H."/>
            <person name="Kawai J."/>
            <person name="Hayashizaki Y."/>
        </authorList>
    </citation>
    <scope>NUCLEOTIDE SEQUENCE [LARGE SCALE MRNA] OF 730-1279</scope>
    <source>
        <strain>C57BL/6J</strain>
        <tissue>Retina</tissue>
    </source>
</reference>
<reference key="3">
    <citation type="journal article" date="2010" name="Am. J. Hum. Genet.">
        <title>Mutations in C2orf71 cause autosomal-recessive retinitis pigmentosa.</title>
        <authorList>
            <person name="Collin R.W.J."/>
            <person name="Safieh C."/>
            <person name="Littink K.W."/>
            <person name="Shalev S.A."/>
            <person name="Garzozi H.J."/>
            <person name="Rizel L."/>
            <person name="Abbasi A.H."/>
            <person name="Cremers F.P.M."/>
            <person name="den Hollander A.I."/>
            <person name="Klevering B.J."/>
            <person name="Ben-Yosef T."/>
        </authorList>
    </citation>
    <scope>DEVELOPMENTAL STAGE</scope>
</reference>
<reference key="4">
    <citation type="journal article" date="2015" name="Hum. Mol. Genet.">
        <title>Animals deficient in C2Orf71, an autosomal recessive retinitis pigmentosa-associated locus, develop severe early-onset retinal degeneration.</title>
        <authorList>
            <person name="Kevany B.M."/>
            <person name="Zhang N."/>
            <person name="Jastrzebska B."/>
            <person name="Palczewski K."/>
        </authorList>
    </citation>
    <scope>DISRUPTION PHENOTYPE</scope>
    <scope>TISSUE SPECIFICITY</scope>
    <scope>SUBCELLULAR LOCATION</scope>
    <scope>FUNCTION</scope>
</reference>
<gene>
    <name evidence="7" type="primary">Pcare</name>
</gene>
<accession>Q6PAC4</accession>
<accession>Q8BXR7</accession>
<accession>Q8R0C5</accession>
<proteinExistence type="evidence at transcript level"/>
<organism>
    <name type="scientific">Mus musculus</name>
    <name type="common">Mouse</name>
    <dbReference type="NCBI Taxonomy" id="10090"/>
    <lineage>
        <taxon>Eukaryota</taxon>
        <taxon>Metazoa</taxon>
        <taxon>Chordata</taxon>
        <taxon>Craniata</taxon>
        <taxon>Vertebrata</taxon>
        <taxon>Euteleostomi</taxon>
        <taxon>Mammalia</taxon>
        <taxon>Eutheria</taxon>
        <taxon>Euarchontoglires</taxon>
        <taxon>Glires</taxon>
        <taxon>Rodentia</taxon>
        <taxon>Myomorpha</taxon>
        <taxon>Muroidea</taxon>
        <taxon>Muridae</taxon>
        <taxon>Murinae</taxon>
        <taxon>Mus</taxon>
        <taxon>Mus</taxon>
    </lineage>
</organism>